<organism>
    <name type="scientific">Aspergillus japonicus</name>
    <dbReference type="NCBI Taxonomy" id="34381"/>
    <lineage>
        <taxon>Eukaryota</taxon>
        <taxon>Fungi</taxon>
        <taxon>Dikarya</taxon>
        <taxon>Ascomycota</taxon>
        <taxon>Pezizomycotina</taxon>
        <taxon>Eurotiomycetes</taxon>
        <taxon>Eurotiomycetidae</taxon>
        <taxon>Eurotiales</taxon>
        <taxon>Aspergillaceae</taxon>
        <taxon>Aspergillus</taxon>
        <taxon>Aspergillus subgen. Circumdati</taxon>
    </lineage>
</organism>
<sequence length="804" mass="86258">MAVAALALLALLPQALGQHNSSYVDYNVEANPDLFPQCLDTISLSFPDCQSGPLSKNLVCDSTASPYDRAAALVSLFTLEELIANTGNTSPGVPRLGLPPYQVWSEALHGLARANFTDNGAYSWATSFPSPILSAAAFNRTLINQIASIISTQGRAFNNAGRFGLDVYSPNINTFRHPVWGRGQETPGEDAYTLTAAYAYEYITGIQGGVNPEHLKLAATAKHFAGYDIENWDNHSRLGNDVNITQQDLAEYYTPQFLVAARDAHVHSFMCSYNAVNGVPSCSNTFFLQTLLRDTFSFVDHGYVSGDCGAVYGVFNPHGYAANEPSAAADAILAGTDIDCGTSYQYHFNESITTGAVARDDIERGFIRLYANLVELGYFDGNSSSSNPYRSLGWPDVQKTDAWNISYEAAVEGIVLLKNDGTLPLASPSEGKNKSIALIGPWANATTQLQGNYYGDAPYLISPVDAFTAAGYTVHYAPGTEISTNSTANFSAALSAARAADTIVFLGGIDNTIEAEAQDRSSIAWPGNQLELISQLAAQKSDDQPLVVYQMGGGQVDSSALKSNAKVNALLWGGYPGQSGGLALRDILTGARAPAGRLTTTQYPAAYAESFSALDMNLRPNETTQNPGQTYMWYTGEPVYAFGHGLFYTTFNASSAQAAKTKYTFNITDLTSAAHPDTTTVGQRTLFNFTASITNSGQRDSDYTALVYANTSTAGPSPYPNKWLVGFDRLAAVAKEGGTAELNVPVAVDRLARVDEAGNTVLFPGRYEVALNNEREVVVEVELVGEQVVLLKWPEEVQGVAGDE</sequence>
<reference key="1">
    <citation type="journal article" date="2008" name="J. Biosci. Bioeng.">
        <title>Purification and properties of an extracellular beta-xylosidase from Aspergillus japonicus and sequence analysis of the encoding gene.</title>
        <authorList>
            <person name="Wakiyama M."/>
            <person name="Yosihara K."/>
            <person name="Hayashi S."/>
            <person name="Ohta K."/>
        </authorList>
    </citation>
    <scope>NUCLEOTIDE SEQUENCE [GENOMIC DNA]</scope>
    <scope>PROTEIN SEQUENCE OF 82-91 AND 413-422</scope>
    <scope>SUBCELLULAR LOCATION</scope>
    <scope>GLYCOSYLATION</scope>
    <scope>FUNCTION</scope>
    <scope>BIOPHYSICOCHEMICAL PROPERTIES</scope>
</reference>
<proteinExistence type="evidence at protein level"/>
<feature type="signal peptide" evidence="2">
    <location>
        <begin position="1"/>
        <end position="17"/>
    </location>
</feature>
<feature type="chain" id="PRO_0000393289" description="Probable exo-1,4-beta-xylosidase xlnD">
    <location>
        <begin position="18"/>
        <end position="804"/>
    </location>
</feature>
<feature type="active site" evidence="1">
    <location>
        <position position="307"/>
    </location>
</feature>
<feature type="glycosylation site" description="N-linked (GlcNAc...) asparagine" evidence="2">
    <location>
        <position position="20"/>
    </location>
</feature>
<feature type="glycosylation site" description="N-linked (GlcNAc...) asparagine" evidence="2">
    <location>
        <position position="115"/>
    </location>
</feature>
<feature type="glycosylation site" description="N-linked (GlcNAc...) asparagine" evidence="2">
    <location>
        <position position="139"/>
    </location>
</feature>
<feature type="glycosylation site" description="N-linked (GlcNAc...) asparagine" evidence="2">
    <location>
        <position position="234"/>
    </location>
</feature>
<feature type="glycosylation site" description="N-linked (GlcNAc...) asparagine" evidence="2">
    <location>
        <position position="243"/>
    </location>
</feature>
<feature type="glycosylation site" description="N-linked (GlcNAc...) asparagine" evidence="2">
    <location>
        <position position="349"/>
    </location>
</feature>
<feature type="glycosylation site" description="N-linked (GlcNAc...) asparagine" evidence="2">
    <location>
        <position position="382"/>
    </location>
</feature>
<feature type="glycosylation site" description="N-linked (GlcNAc...) asparagine" evidence="2">
    <location>
        <position position="404"/>
    </location>
</feature>
<feature type="glycosylation site" description="N-linked (GlcNAc...) asparagine" evidence="2">
    <location>
        <position position="433"/>
    </location>
</feature>
<feature type="glycosylation site" description="N-linked (GlcNAc...) asparagine" evidence="2">
    <location>
        <position position="444"/>
    </location>
</feature>
<feature type="glycosylation site" description="N-linked (GlcNAc...) asparagine" evidence="2">
    <location>
        <position position="485"/>
    </location>
</feature>
<feature type="glycosylation site" description="N-linked (GlcNAc...) asparagine" evidence="2">
    <location>
        <position position="489"/>
    </location>
</feature>
<feature type="glycosylation site" description="N-linked (GlcNAc...) asparagine" evidence="2">
    <location>
        <position position="621"/>
    </location>
</feature>
<feature type="glycosylation site" description="N-linked (GlcNAc...) asparagine" evidence="2">
    <location>
        <position position="652"/>
    </location>
</feature>
<feature type="glycosylation site" description="N-linked (GlcNAc...) asparagine" evidence="2">
    <location>
        <position position="666"/>
    </location>
</feature>
<feature type="glycosylation site" description="N-linked (GlcNAc...) asparagine" evidence="2">
    <location>
        <position position="688"/>
    </location>
</feature>
<feature type="glycosylation site" description="N-linked (GlcNAc...) asparagine" evidence="2">
    <location>
        <position position="710"/>
    </location>
</feature>
<keyword id="KW-0119">Carbohydrate metabolism</keyword>
<keyword id="KW-0903">Direct protein sequencing</keyword>
<keyword id="KW-0325">Glycoprotein</keyword>
<keyword id="KW-0326">Glycosidase</keyword>
<keyword id="KW-0378">Hydrolase</keyword>
<keyword id="KW-0624">Polysaccharide degradation</keyword>
<keyword id="KW-0964">Secreted</keyword>
<keyword id="KW-0732">Signal</keyword>
<keyword id="KW-0858">Xylan degradation</keyword>
<gene>
    <name type="primary">xlnD</name>
    <name type="synonym">xylA</name>
</gene>
<evidence type="ECO:0000250" key="1"/>
<evidence type="ECO:0000255" key="2"/>
<evidence type="ECO:0000269" key="3">
    <source ref="1"/>
</evidence>
<evidence type="ECO:0000305" key="4"/>
<protein>
    <recommendedName>
        <fullName>Probable exo-1,4-beta-xylosidase xlnD</fullName>
        <ecNumber>3.2.1.37</ecNumber>
    </recommendedName>
    <alternativeName>
        <fullName>1,4-beta-D-xylan xylohydrolase xlnD</fullName>
    </alternativeName>
    <alternativeName>
        <fullName>Beta-xylosidase A</fullName>
    </alternativeName>
    <alternativeName>
        <fullName>Beta-xylosidase xlnD</fullName>
    </alternativeName>
    <alternativeName>
        <fullName>Xylobiase xlnD</fullName>
    </alternativeName>
</protein>
<dbReference type="EC" id="3.2.1.37"/>
<dbReference type="EMBL" id="AB379633">
    <property type="protein sequence ID" value="BAG82824.1"/>
    <property type="molecule type" value="Genomic_DNA"/>
</dbReference>
<dbReference type="SMR" id="B6EY09"/>
<dbReference type="CAZy" id="GH3">
    <property type="family name" value="Glycoside Hydrolase Family 3"/>
</dbReference>
<dbReference type="GlyCosmos" id="B6EY09">
    <property type="glycosylation" value="17 sites, No reported glycans"/>
</dbReference>
<dbReference type="UniPathway" id="UPA00114"/>
<dbReference type="GO" id="GO:0005576">
    <property type="term" value="C:extracellular region"/>
    <property type="evidence" value="ECO:0007669"/>
    <property type="project" value="UniProtKB-SubCell"/>
</dbReference>
<dbReference type="GO" id="GO:0046556">
    <property type="term" value="F:alpha-L-arabinofuranosidase activity"/>
    <property type="evidence" value="ECO:0007669"/>
    <property type="project" value="TreeGrafter"/>
</dbReference>
<dbReference type="GO" id="GO:0009044">
    <property type="term" value="F:xylan 1,4-beta-xylosidase activity"/>
    <property type="evidence" value="ECO:0007669"/>
    <property type="project" value="UniProtKB-EC"/>
</dbReference>
<dbReference type="GO" id="GO:0031222">
    <property type="term" value="P:arabinan catabolic process"/>
    <property type="evidence" value="ECO:0007669"/>
    <property type="project" value="TreeGrafter"/>
</dbReference>
<dbReference type="GO" id="GO:0045493">
    <property type="term" value="P:xylan catabolic process"/>
    <property type="evidence" value="ECO:0007669"/>
    <property type="project" value="UniProtKB-UniPathway"/>
</dbReference>
<dbReference type="FunFam" id="2.60.40.10:FF:001420">
    <property type="entry name" value="Exo-1,4-beta-xylosidase xlnD"/>
    <property type="match status" value="1"/>
</dbReference>
<dbReference type="FunFam" id="3.40.50.1700:FF:000007">
    <property type="entry name" value="Exo-1,4-beta-xylosidase xlnD"/>
    <property type="match status" value="1"/>
</dbReference>
<dbReference type="Gene3D" id="3.40.50.1700">
    <property type="entry name" value="Glycoside hydrolase family 3 C-terminal domain"/>
    <property type="match status" value="1"/>
</dbReference>
<dbReference type="Gene3D" id="3.20.20.300">
    <property type="entry name" value="Glycoside hydrolase, family 3, N-terminal domain"/>
    <property type="match status" value="1"/>
</dbReference>
<dbReference type="Gene3D" id="2.60.40.10">
    <property type="entry name" value="Immunoglobulins"/>
    <property type="match status" value="1"/>
</dbReference>
<dbReference type="InterPro" id="IPR044993">
    <property type="entry name" value="BXL"/>
</dbReference>
<dbReference type="InterPro" id="IPR026891">
    <property type="entry name" value="Fn3-like"/>
</dbReference>
<dbReference type="InterPro" id="IPR002772">
    <property type="entry name" value="Glyco_hydro_3_C"/>
</dbReference>
<dbReference type="InterPro" id="IPR036881">
    <property type="entry name" value="Glyco_hydro_3_C_sf"/>
</dbReference>
<dbReference type="InterPro" id="IPR001764">
    <property type="entry name" value="Glyco_hydro_3_N"/>
</dbReference>
<dbReference type="InterPro" id="IPR036962">
    <property type="entry name" value="Glyco_hydro_3_N_sf"/>
</dbReference>
<dbReference type="InterPro" id="IPR017853">
    <property type="entry name" value="Glycoside_hydrolase_SF"/>
</dbReference>
<dbReference type="InterPro" id="IPR013783">
    <property type="entry name" value="Ig-like_fold"/>
</dbReference>
<dbReference type="PANTHER" id="PTHR42721:SF13">
    <property type="entry name" value="EXO-1,4-BETA-XYLOSIDASE XLND"/>
    <property type="match status" value="1"/>
</dbReference>
<dbReference type="PANTHER" id="PTHR42721">
    <property type="entry name" value="SUGAR HYDROLASE-RELATED"/>
    <property type="match status" value="1"/>
</dbReference>
<dbReference type="Pfam" id="PF00933">
    <property type="entry name" value="Glyco_hydro_3"/>
    <property type="match status" value="1"/>
</dbReference>
<dbReference type="Pfam" id="PF01915">
    <property type="entry name" value="Glyco_hydro_3_C"/>
    <property type="match status" value="1"/>
</dbReference>
<dbReference type="SMART" id="SM01217">
    <property type="entry name" value="Fn3_like"/>
    <property type="match status" value="1"/>
</dbReference>
<dbReference type="SUPFAM" id="SSF51445">
    <property type="entry name" value="(Trans)glycosidases"/>
    <property type="match status" value="1"/>
</dbReference>
<dbReference type="SUPFAM" id="SSF52279">
    <property type="entry name" value="Beta-D-glucan exohydrolase, C-terminal domain"/>
    <property type="match status" value="1"/>
</dbReference>
<accession>B6EY09</accession>
<name>XYND_ASPJA</name>
<comment type="function">
    <text evidence="1 3">Xylan 1,4-beta-xylosidase involved in the hydrolysis of xylan, a major structural heterogeneous polysaccharide found in plant biomass representing the second most abundant polysaccharide in the biosphere, after cellulose.</text>
</comment>
<comment type="catalytic activity">
    <reaction>
        <text>Hydrolysis of (1-&gt;4)-beta-D-xylans, to remove successive D-xylose residues from the non-reducing termini.</text>
        <dbReference type="EC" id="3.2.1.37"/>
    </reaction>
</comment>
<comment type="biophysicochemical properties">
    <kinetics>
        <KM evidence="3">314 uM for p-nitrophenyl (pNP)-beta-D-xylopyranoside</KM>
        <Vmax evidence="3">114.0 umol/min/mg enzyme</Vmax>
    </kinetics>
    <phDependence>
        <text evidence="3">Optimum pH is 4.0. Retains greater than 90 percent of its original activity between pH 2.0 and 7.0 at room temperature for 3 h.</text>
    </phDependence>
    <temperatureDependence>
        <text evidence="3">Optimum temperature 70 degrees Celsius. Remains stable up to 60 degrees Celsius for 30 minutes, but loses activity at 80 degrees Celsius.</text>
    </temperatureDependence>
</comment>
<comment type="pathway">
    <text>Glycan degradation; xylan degradation.</text>
</comment>
<comment type="subcellular location">
    <subcellularLocation>
        <location evidence="3">Secreted</location>
    </subcellularLocation>
</comment>
<comment type="similarity">
    <text evidence="4">Belongs to the glycosyl hydrolase 3 family.</text>
</comment>